<keyword id="KW-0150">Chloroplast</keyword>
<keyword id="KW-0472">Membrane</keyword>
<keyword id="KW-0520">NAD</keyword>
<keyword id="KW-0521">NADP</keyword>
<keyword id="KW-0934">Plastid</keyword>
<keyword id="KW-0618">Plastoquinone</keyword>
<keyword id="KW-0874">Quinone</keyword>
<keyword id="KW-0793">Thylakoid</keyword>
<keyword id="KW-1278">Translocase</keyword>
<keyword id="KW-0812">Transmembrane</keyword>
<keyword id="KW-1133">Transmembrane helix</keyword>
<keyword id="KW-0813">Transport</keyword>
<comment type="function">
    <text evidence="1">NDH shuttles electrons from NAD(P)H:plastoquinone, via FMN and iron-sulfur (Fe-S) centers, to quinones in the photosynthetic chain and possibly in a chloroplast respiratory chain. The immediate electron acceptor for the enzyme in this species is believed to be plastoquinone. Couples the redox reaction to proton translocation, and thus conserves the redox energy in a proton gradient.</text>
</comment>
<comment type="catalytic activity">
    <reaction evidence="1">
        <text>a plastoquinone + NADH + (n+1) H(+)(in) = a plastoquinol + NAD(+) + n H(+)(out)</text>
        <dbReference type="Rhea" id="RHEA:42608"/>
        <dbReference type="Rhea" id="RHEA-COMP:9561"/>
        <dbReference type="Rhea" id="RHEA-COMP:9562"/>
        <dbReference type="ChEBI" id="CHEBI:15378"/>
        <dbReference type="ChEBI" id="CHEBI:17757"/>
        <dbReference type="ChEBI" id="CHEBI:57540"/>
        <dbReference type="ChEBI" id="CHEBI:57945"/>
        <dbReference type="ChEBI" id="CHEBI:62192"/>
    </reaction>
</comment>
<comment type="catalytic activity">
    <reaction evidence="1">
        <text>a plastoquinone + NADPH + (n+1) H(+)(in) = a plastoquinol + NADP(+) + n H(+)(out)</text>
        <dbReference type="Rhea" id="RHEA:42612"/>
        <dbReference type="Rhea" id="RHEA-COMP:9561"/>
        <dbReference type="Rhea" id="RHEA-COMP:9562"/>
        <dbReference type="ChEBI" id="CHEBI:15378"/>
        <dbReference type="ChEBI" id="CHEBI:17757"/>
        <dbReference type="ChEBI" id="CHEBI:57783"/>
        <dbReference type="ChEBI" id="CHEBI:58349"/>
        <dbReference type="ChEBI" id="CHEBI:62192"/>
    </reaction>
</comment>
<comment type="subunit">
    <text evidence="1">NDH is composed of at least 16 different subunits, 5 of which are encoded in the nucleus.</text>
</comment>
<comment type="subcellular location">
    <subcellularLocation>
        <location evidence="1">Plastid</location>
        <location evidence="1">Chloroplast thylakoid membrane</location>
        <topology evidence="1">Multi-pass membrane protein</topology>
    </subcellularLocation>
</comment>
<comment type="similarity">
    <text evidence="1">Belongs to the complex I subunit 4L family.</text>
</comment>
<sequence>MMLEHIPVLSAYLFSIDIYGLITSRNMVRALMCLELILNAVNINFVTFSDFFDSRQLKGNIFSIFVIAIAAAEAAIGSAIVSSIYRNRKSTRINQSTLLNK</sequence>
<evidence type="ECO:0000255" key="1">
    <source>
        <dbReference type="HAMAP-Rule" id="MF_01456"/>
    </source>
</evidence>
<dbReference type="EC" id="7.1.1.-" evidence="1"/>
<dbReference type="EMBL" id="AP009123">
    <property type="protein sequence ID" value="BAF41299.1"/>
    <property type="molecule type" value="Genomic_DNA"/>
</dbReference>
<dbReference type="RefSeq" id="YP_913238.1">
    <property type="nucleotide sequence ID" value="NC_008641.1"/>
</dbReference>
<dbReference type="SMR" id="A0ZZ87"/>
<dbReference type="GeneID" id="4575198"/>
<dbReference type="GO" id="GO:0009535">
    <property type="term" value="C:chloroplast thylakoid membrane"/>
    <property type="evidence" value="ECO:0007669"/>
    <property type="project" value="UniProtKB-SubCell"/>
</dbReference>
<dbReference type="GO" id="GO:0030964">
    <property type="term" value="C:NADH dehydrogenase complex"/>
    <property type="evidence" value="ECO:0007669"/>
    <property type="project" value="TreeGrafter"/>
</dbReference>
<dbReference type="GO" id="GO:0016655">
    <property type="term" value="F:oxidoreductase activity, acting on NAD(P)H, quinone or similar compound as acceptor"/>
    <property type="evidence" value="ECO:0007669"/>
    <property type="project" value="UniProtKB-UniRule"/>
</dbReference>
<dbReference type="GO" id="GO:0048038">
    <property type="term" value="F:quinone binding"/>
    <property type="evidence" value="ECO:0007669"/>
    <property type="project" value="UniProtKB-KW"/>
</dbReference>
<dbReference type="GO" id="GO:0042773">
    <property type="term" value="P:ATP synthesis coupled electron transport"/>
    <property type="evidence" value="ECO:0007669"/>
    <property type="project" value="InterPro"/>
</dbReference>
<dbReference type="GO" id="GO:0019684">
    <property type="term" value="P:photosynthesis, light reaction"/>
    <property type="evidence" value="ECO:0007669"/>
    <property type="project" value="UniProtKB-UniRule"/>
</dbReference>
<dbReference type="FunFam" id="1.10.287.3510:FF:000001">
    <property type="entry name" value="NADH-quinone oxidoreductase subunit K"/>
    <property type="match status" value="1"/>
</dbReference>
<dbReference type="Gene3D" id="1.10.287.3510">
    <property type="match status" value="1"/>
</dbReference>
<dbReference type="HAMAP" id="MF_01456">
    <property type="entry name" value="NDH1_NuoK"/>
    <property type="match status" value="1"/>
</dbReference>
<dbReference type="InterPro" id="IPR001133">
    <property type="entry name" value="NADH_UbQ_OxRdtase_chain4L/K"/>
</dbReference>
<dbReference type="InterPro" id="IPR039428">
    <property type="entry name" value="NUOK/Mnh_C1-like"/>
</dbReference>
<dbReference type="NCBIfam" id="NF004320">
    <property type="entry name" value="PRK05715.1-2"/>
    <property type="match status" value="1"/>
</dbReference>
<dbReference type="PANTHER" id="PTHR11434:SF16">
    <property type="entry name" value="NADH-UBIQUINONE OXIDOREDUCTASE CHAIN 4L"/>
    <property type="match status" value="1"/>
</dbReference>
<dbReference type="PANTHER" id="PTHR11434">
    <property type="entry name" value="NADH-UBIQUINONE OXIDOREDUCTASE SUBUNIT ND4L"/>
    <property type="match status" value="1"/>
</dbReference>
<dbReference type="Pfam" id="PF00420">
    <property type="entry name" value="Oxidored_q2"/>
    <property type="match status" value="1"/>
</dbReference>
<geneLocation type="chloroplast"/>
<accession>A0ZZ87</accession>
<gene>
    <name evidence="1" type="primary">ndhE</name>
</gene>
<proteinExistence type="inferred from homology"/>
<protein>
    <recommendedName>
        <fullName evidence="1">NAD(P)H-quinone oxidoreductase subunit 4L, chloroplastic</fullName>
        <ecNumber evidence="1">7.1.1.-</ecNumber>
    </recommendedName>
    <alternativeName>
        <fullName evidence="1">NAD(P)H dehydrogenase subunit 4L</fullName>
    </alternativeName>
    <alternativeName>
        <fullName evidence="1">NADH-plastoquinone oxidoreductase subunit 4L</fullName>
    </alternativeName>
</protein>
<name>NU4LC_GOSBA</name>
<feature type="chain" id="PRO_0000360330" description="NAD(P)H-quinone oxidoreductase subunit 4L, chloroplastic">
    <location>
        <begin position="1"/>
        <end position="101"/>
    </location>
</feature>
<feature type="transmembrane region" description="Helical" evidence="1">
    <location>
        <begin position="2"/>
        <end position="22"/>
    </location>
</feature>
<feature type="transmembrane region" description="Helical" evidence="1">
    <location>
        <begin position="32"/>
        <end position="52"/>
    </location>
</feature>
<feature type="transmembrane region" description="Helical" evidence="1">
    <location>
        <begin position="61"/>
        <end position="81"/>
    </location>
</feature>
<reference key="1">
    <citation type="journal article" date="2006" name="Genes Genet. Syst.">
        <title>Complete nucleotide sequence of the cotton (Gossypium barbadense L.) chloroplast genome with a comparative analysis of sequences among 9 dicot plants.</title>
        <authorList>
            <person name="Ibrahim R.I.H."/>
            <person name="Azuma J."/>
            <person name="Sakamoto M."/>
        </authorList>
    </citation>
    <scope>NUCLEOTIDE SEQUENCE [LARGE SCALE GENOMIC DNA]</scope>
</reference>
<organism>
    <name type="scientific">Gossypium barbadense</name>
    <name type="common">Sea Island cotton</name>
    <name type="synonym">Hibiscus barbadensis</name>
    <dbReference type="NCBI Taxonomy" id="3634"/>
    <lineage>
        <taxon>Eukaryota</taxon>
        <taxon>Viridiplantae</taxon>
        <taxon>Streptophyta</taxon>
        <taxon>Embryophyta</taxon>
        <taxon>Tracheophyta</taxon>
        <taxon>Spermatophyta</taxon>
        <taxon>Magnoliopsida</taxon>
        <taxon>eudicotyledons</taxon>
        <taxon>Gunneridae</taxon>
        <taxon>Pentapetalae</taxon>
        <taxon>rosids</taxon>
        <taxon>malvids</taxon>
        <taxon>Malvales</taxon>
        <taxon>Malvaceae</taxon>
        <taxon>Malvoideae</taxon>
        <taxon>Gossypium</taxon>
    </lineage>
</organism>